<gene>
    <name evidence="1" type="primary">rimK</name>
    <name type="ordered locus">CJA_1251</name>
</gene>
<proteinExistence type="inferred from homology"/>
<accession>B3PCD4</accession>
<organism>
    <name type="scientific">Cellvibrio japonicus (strain Ueda107)</name>
    <name type="common">Pseudomonas fluorescens subsp. cellulosa</name>
    <dbReference type="NCBI Taxonomy" id="498211"/>
    <lineage>
        <taxon>Bacteria</taxon>
        <taxon>Pseudomonadati</taxon>
        <taxon>Pseudomonadota</taxon>
        <taxon>Gammaproteobacteria</taxon>
        <taxon>Cellvibrionales</taxon>
        <taxon>Cellvibrionaceae</taxon>
        <taxon>Cellvibrio</taxon>
    </lineage>
</organism>
<protein>
    <recommendedName>
        <fullName evidence="1">Probable alpha-L-glutamate ligase</fullName>
        <ecNumber evidence="1">6.3.2.-</ecNumber>
    </recommendedName>
</protein>
<reference key="1">
    <citation type="journal article" date="2008" name="J. Bacteriol.">
        <title>Insights into plant cell wall degradation from the genome sequence of the soil bacterium Cellvibrio japonicus.</title>
        <authorList>
            <person name="DeBoy R.T."/>
            <person name="Mongodin E.F."/>
            <person name="Fouts D.E."/>
            <person name="Tailford L.E."/>
            <person name="Khouri H."/>
            <person name="Emerson J.B."/>
            <person name="Mohamoud Y."/>
            <person name="Watkins K."/>
            <person name="Henrissat B."/>
            <person name="Gilbert H.J."/>
            <person name="Nelson K.E."/>
        </authorList>
    </citation>
    <scope>NUCLEOTIDE SEQUENCE [LARGE SCALE GENOMIC DNA]</scope>
    <source>
        <strain>Ueda107</strain>
    </source>
</reference>
<name>RIMK_CELJU</name>
<sequence>MKIAILSRNRRLYSTRRLVEACTQRGHEVRVIDILKCYIDIASASPAIWYMGEKLEGFDAVIPRIGASVTHYGLAVIRQFEMMGVYCLTESIALGRSRDKLRALQLLSRKGIGLPKTSFAYNVYDARELIKLVGGTPLVLKLCEGTQGKGIVLAETQKAAESVIEAFRELRAEFLVQEFIKEANGSDVRCFVVGDKVVASMERTAQDGEFRSNLHRGGTAKVTKLSPTERRTAIKAAQTMGLKVAGVDLLRSSRGPLVMEVNSSPGLEGIESATGKDIAGLIVAYMEENAKPVTTTRAGKG</sequence>
<evidence type="ECO:0000255" key="1">
    <source>
        <dbReference type="HAMAP-Rule" id="MF_01552"/>
    </source>
</evidence>
<feature type="chain" id="PRO_1000194360" description="Probable alpha-L-glutamate ligase">
    <location>
        <begin position="1"/>
        <end position="301"/>
    </location>
</feature>
<feature type="domain" description="ATP-grasp" evidence="1">
    <location>
        <begin position="104"/>
        <end position="287"/>
    </location>
</feature>
<feature type="binding site" evidence="1">
    <location>
        <position position="141"/>
    </location>
    <ligand>
        <name>ATP</name>
        <dbReference type="ChEBI" id="CHEBI:30616"/>
    </ligand>
</feature>
<feature type="binding site" evidence="1">
    <location>
        <begin position="178"/>
        <end position="179"/>
    </location>
    <ligand>
        <name>ATP</name>
        <dbReference type="ChEBI" id="CHEBI:30616"/>
    </ligand>
</feature>
<feature type="binding site" evidence="1">
    <location>
        <position position="187"/>
    </location>
    <ligand>
        <name>ATP</name>
        <dbReference type="ChEBI" id="CHEBI:30616"/>
    </ligand>
</feature>
<feature type="binding site" evidence="1">
    <location>
        <begin position="211"/>
        <end position="213"/>
    </location>
    <ligand>
        <name>ATP</name>
        <dbReference type="ChEBI" id="CHEBI:30616"/>
    </ligand>
</feature>
<feature type="binding site" evidence="1">
    <location>
        <position position="248"/>
    </location>
    <ligand>
        <name>Mg(2+)</name>
        <dbReference type="ChEBI" id="CHEBI:18420"/>
        <label>1</label>
    </ligand>
</feature>
<feature type="binding site" evidence="1">
    <location>
        <position position="248"/>
    </location>
    <ligand>
        <name>Mn(2+)</name>
        <dbReference type="ChEBI" id="CHEBI:29035"/>
        <label>1</label>
    </ligand>
</feature>
<feature type="binding site" evidence="1">
    <location>
        <position position="260"/>
    </location>
    <ligand>
        <name>Mg(2+)</name>
        <dbReference type="ChEBI" id="CHEBI:18420"/>
        <label>1</label>
    </ligand>
</feature>
<feature type="binding site" evidence="1">
    <location>
        <position position="260"/>
    </location>
    <ligand>
        <name>Mg(2+)</name>
        <dbReference type="ChEBI" id="CHEBI:18420"/>
        <label>2</label>
    </ligand>
</feature>
<feature type="binding site" evidence="1">
    <location>
        <position position="260"/>
    </location>
    <ligand>
        <name>Mn(2+)</name>
        <dbReference type="ChEBI" id="CHEBI:29035"/>
        <label>1</label>
    </ligand>
</feature>
<feature type="binding site" evidence="1">
    <location>
        <position position="260"/>
    </location>
    <ligand>
        <name>Mn(2+)</name>
        <dbReference type="ChEBI" id="CHEBI:29035"/>
        <label>2</label>
    </ligand>
</feature>
<feature type="binding site" evidence="1">
    <location>
        <position position="262"/>
    </location>
    <ligand>
        <name>Mg(2+)</name>
        <dbReference type="ChEBI" id="CHEBI:18420"/>
        <label>2</label>
    </ligand>
</feature>
<feature type="binding site" evidence="1">
    <location>
        <position position="262"/>
    </location>
    <ligand>
        <name>Mn(2+)</name>
        <dbReference type="ChEBI" id="CHEBI:29035"/>
        <label>2</label>
    </ligand>
</feature>
<keyword id="KW-0067">ATP-binding</keyword>
<keyword id="KW-0436">Ligase</keyword>
<keyword id="KW-0460">Magnesium</keyword>
<keyword id="KW-0464">Manganese</keyword>
<keyword id="KW-0479">Metal-binding</keyword>
<keyword id="KW-0547">Nucleotide-binding</keyword>
<keyword id="KW-0648">Protein biosynthesis</keyword>
<keyword id="KW-1185">Reference proteome</keyword>
<comment type="cofactor">
    <cofactor evidence="1">
        <name>Mg(2+)</name>
        <dbReference type="ChEBI" id="CHEBI:18420"/>
    </cofactor>
    <cofactor evidence="1">
        <name>Mn(2+)</name>
        <dbReference type="ChEBI" id="CHEBI:29035"/>
    </cofactor>
    <text evidence="1">Binds 2 magnesium or manganese ions per subunit.</text>
</comment>
<comment type="similarity">
    <text evidence="1">Belongs to the RimK family.</text>
</comment>
<dbReference type="EC" id="6.3.2.-" evidence="1"/>
<dbReference type="EMBL" id="CP000934">
    <property type="protein sequence ID" value="ACE82853.1"/>
    <property type="molecule type" value="Genomic_DNA"/>
</dbReference>
<dbReference type="RefSeq" id="WP_012486893.1">
    <property type="nucleotide sequence ID" value="NC_010995.1"/>
</dbReference>
<dbReference type="SMR" id="B3PCD4"/>
<dbReference type="STRING" id="498211.CJA_1251"/>
<dbReference type="KEGG" id="cja:CJA_1251"/>
<dbReference type="eggNOG" id="COG0189">
    <property type="taxonomic scope" value="Bacteria"/>
</dbReference>
<dbReference type="HOGENOM" id="CLU_054353_0_1_6"/>
<dbReference type="OrthoDB" id="3865600at2"/>
<dbReference type="Proteomes" id="UP000001036">
    <property type="component" value="Chromosome"/>
</dbReference>
<dbReference type="GO" id="GO:0005737">
    <property type="term" value="C:cytoplasm"/>
    <property type="evidence" value="ECO:0007669"/>
    <property type="project" value="TreeGrafter"/>
</dbReference>
<dbReference type="GO" id="GO:0005524">
    <property type="term" value="F:ATP binding"/>
    <property type="evidence" value="ECO:0007669"/>
    <property type="project" value="UniProtKB-UniRule"/>
</dbReference>
<dbReference type="GO" id="GO:0046872">
    <property type="term" value="F:metal ion binding"/>
    <property type="evidence" value="ECO:0007669"/>
    <property type="project" value="UniProtKB-KW"/>
</dbReference>
<dbReference type="GO" id="GO:0018169">
    <property type="term" value="F:ribosomal S6-glutamic acid ligase activity"/>
    <property type="evidence" value="ECO:0007669"/>
    <property type="project" value="TreeGrafter"/>
</dbReference>
<dbReference type="GO" id="GO:0036211">
    <property type="term" value="P:protein modification process"/>
    <property type="evidence" value="ECO:0007669"/>
    <property type="project" value="InterPro"/>
</dbReference>
<dbReference type="GO" id="GO:0009432">
    <property type="term" value="P:SOS response"/>
    <property type="evidence" value="ECO:0007669"/>
    <property type="project" value="TreeGrafter"/>
</dbReference>
<dbReference type="GO" id="GO:0006412">
    <property type="term" value="P:translation"/>
    <property type="evidence" value="ECO:0007669"/>
    <property type="project" value="UniProtKB-KW"/>
</dbReference>
<dbReference type="FunFam" id="3.40.50.20:FF:000004">
    <property type="entry name" value="Probable alpha-L-glutamate ligase"/>
    <property type="match status" value="1"/>
</dbReference>
<dbReference type="FunFam" id="3.30.1490.20:FF:000005">
    <property type="entry name" value="Probable alpha-L-glutamate ligase 1"/>
    <property type="match status" value="1"/>
</dbReference>
<dbReference type="Gene3D" id="3.40.50.20">
    <property type="match status" value="1"/>
</dbReference>
<dbReference type="Gene3D" id="3.30.1490.20">
    <property type="entry name" value="ATP-grasp fold, A domain"/>
    <property type="match status" value="1"/>
</dbReference>
<dbReference type="Gene3D" id="3.30.470.20">
    <property type="entry name" value="ATP-grasp fold, B domain"/>
    <property type="match status" value="1"/>
</dbReference>
<dbReference type="HAMAP" id="MF_01552">
    <property type="entry name" value="RimK"/>
    <property type="match status" value="1"/>
</dbReference>
<dbReference type="InterPro" id="IPR011761">
    <property type="entry name" value="ATP-grasp"/>
</dbReference>
<dbReference type="InterPro" id="IPR013651">
    <property type="entry name" value="ATP-grasp_RimK-type"/>
</dbReference>
<dbReference type="InterPro" id="IPR013815">
    <property type="entry name" value="ATP_grasp_subdomain_1"/>
</dbReference>
<dbReference type="InterPro" id="IPR023533">
    <property type="entry name" value="RimK"/>
</dbReference>
<dbReference type="InterPro" id="IPR041107">
    <property type="entry name" value="Rimk_N"/>
</dbReference>
<dbReference type="InterPro" id="IPR004666">
    <property type="entry name" value="Rp_bS6_RimK/Lys_biosynth_LsyX"/>
</dbReference>
<dbReference type="NCBIfam" id="NF007764">
    <property type="entry name" value="PRK10446.1"/>
    <property type="match status" value="1"/>
</dbReference>
<dbReference type="NCBIfam" id="TIGR00768">
    <property type="entry name" value="rimK_fam"/>
    <property type="match status" value="1"/>
</dbReference>
<dbReference type="PANTHER" id="PTHR21621:SF7">
    <property type="entry name" value="RIBOSOMAL PROTEIN BS6--L-GLUTAMATE LIGASE"/>
    <property type="match status" value="1"/>
</dbReference>
<dbReference type="PANTHER" id="PTHR21621">
    <property type="entry name" value="RIBOSOMAL PROTEIN S6 MODIFICATION PROTEIN"/>
    <property type="match status" value="1"/>
</dbReference>
<dbReference type="Pfam" id="PF08443">
    <property type="entry name" value="RimK"/>
    <property type="match status" value="1"/>
</dbReference>
<dbReference type="Pfam" id="PF18030">
    <property type="entry name" value="Rimk_N"/>
    <property type="match status" value="1"/>
</dbReference>
<dbReference type="SUPFAM" id="SSF56059">
    <property type="entry name" value="Glutathione synthetase ATP-binding domain-like"/>
    <property type="match status" value="1"/>
</dbReference>
<dbReference type="PROSITE" id="PS50975">
    <property type="entry name" value="ATP_GRASP"/>
    <property type="match status" value="1"/>
</dbReference>